<keyword id="KW-0119">Carbohydrate metabolism</keyword>
<keyword id="KW-0479">Metal-binding</keyword>
<keyword id="KW-0520">NAD</keyword>
<keyword id="KW-0560">Oxidoreductase</keyword>
<protein>
    <recommendedName>
        <fullName evidence="2">Putative D-threonate 4-phosphate dehydrogenase</fullName>
        <ecNumber evidence="2">1.1.1.408</ecNumber>
    </recommendedName>
</protein>
<name>PDXA2_CLOBK</name>
<sequence length="334" mass="36259">MINNKPIIGIPIGDPAGVGPEIVVKSLTEAEVYEKCNPILIGDAKVIKQAMGFCNVNLNINSIKKADEGKFTLGTIDLIDLNNIDIDELKIGKVQGIAGKAAFEYIKKSVEMAKEGELDAIATTPINKESLREGNVNYIGHTEILADLTDTEDPLTMFEVRGMRVFFLTRHVSLRKACDLVTKERVLDYIIRCSEALEKLGVKDGKMAVAGLNPHSGEHGLFGDEEMKAVVPAIEEAQKMGYKVEGPIGADSVFHLALKGRYNSVLSLYHDQGHIATKTLDFERTIAVTNGMPILRTSVDHGTAFDIAGTGQASSVSMVEAIVLAAKYSPKFKK</sequence>
<evidence type="ECO:0000250" key="1">
    <source>
        <dbReference type="UniProtKB" id="P19624"/>
    </source>
</evidence>
<evidence type="ECO:0000250" key="2">
    <source>
        <dbReference type="UniProtKB" id="P58718"/>
    </source>
</evidence>
<evidence type="ECO:0000305" key="3"/>
<proteinExistence type="inferred from homology"/>
<dbReference type="EC" id="1.1.1.408" evidence="2"/>
<dbReference type="EMBL" id="CP000939">
    <property type="protein sequence ID" value="ACA44016.1"/>
    <property type="molecule type" value="Genomic_DNA"/>
</dbReference>
<dbReference type="RefSeq" id="WP_004451569.1">
    <property type="nucleotide sequence ID" value="NC_010516.1"/>
</dbReference>
<dbReference type="SMR" id="B1IGV8"/>
<dbReference type="KEGG" id="cbb:CLD_2369"/>
<dbReference type="HOGENOM" id="CLU_040168_0_1_9"/>
<dbReference type="Proteomes" id="UP000008541">
    <property type="component" value="Chromosome"/>
</dbReference>
<dbReference type="GO" id="GO:0046872">
    <property type="term" value="F:metal ion binding"/>
    <property type="evidence" value="ECO:0007669"/>
    <property type="project" value="UniProtKB-KW"/>
</dbReference>
<dbReference type="GO" id="GO:0051287">
    <property type="term" value="F:NAD binding"/>
    <property type="evidence" value="ECO:0007669"/>
    <property type="project" value="InterPro"/>
</dbReference>
<dbReference type="GO" id="GO:0016491">
    <property type="term" value="F:oxidoreductase activity"/>
    <property type="evidence" value="ECO:0007669"/>
    <property type="project" value="UniProtKB-KW"/>
</dbReference>
<dbReference type="Gene3D" id="3.40.718.10">
    <property type="entry name" value="Isopropylmalate Dehydrogenase"/>
    <property type="match status" value="1"/>
</dbReference>
<dbReference type="InterPro" id="IPR005255">
    <property type="entry name" value="PdxA_fam"/>
</dbReference>
<dbReference type="NCBIfam" id="TIGR00557">
    <property type="entry name" value="pdxA"/>
    <property type="match status" value="1"/>
</dbReference>
<dbReference type="NCBIfam" id="NF002992">
    <property type="entry name" value="PRK03743.1"/>
    <property type="match status" value="1"/>
</dbReference>
<dbReference type="PANTHER" id="PTHR30004">
    <property type="entry name" value="4-HYDROXYTHREONINE-4-PHOSPHATE DEHYDROGENASE"/>
    <property type="match status" value="1"/>
</dbReference>
<dbReference type="PANTHER" id="PTHR30004:SF6">
    <property type="entry name" value="D-THREONATE 4-PHOSPHATE DEHYDROGENASE"/>
    <property type="match status" value="1"/>
</dbReference>
<dbReference type="Pfam" id="PF04166">
    <property type="entry name" value="PdxA"/>
    <property type="match status" value="1"/>
</dbReference>
<dbReference type="SUPFAM" id="SSF53659">
    <property type="entry name" value="Isocitrate/Isopropylmalate dehydrogenase-like"/>
    <property type="match status" value="1"/>
</dbReference>
<reference key="1">
    <citation type="journal article" date="2007" name="PLoS ONE">
        <title>Analysis of the neurotoxin complex genes in Clostridium botulinum A1-A4 and B1 strains: BoNT/A3, /Ba4 and /B1 clusters are located within plasmids.</title>
        <authorList>
            <person name="Smith T.J."/>
            <person name="Hill K.K."/>
            <person name="Foley B.T."/>
            <person name="Detter J.C."/>
            <person name="Munk A.C."/>
            <person name="Bruce D.C."/>
            <person name="Doggett N.A."/>
            <person name="Smith L.A."/>
            <person name="Marks J.D."/>
            <person name="Xie G."/>
            <person name="Brettin T.S."/>
        </authorList>
    </citation>
    <scope>NUCLEOTIDE SEQUENCE [LARGE SCALE GENOMIC DNA]</scope>
    <source>
        <strain>Okra / Type B1</strain>
    </source>
</reference>
<gene>
    <name type="primary">pdxA</name>
    <name type="ordered locus">CLD_2369</name>
</gene>
<feature type="chain" id="PRO_1000128237" description="Putative D-threonate 4-phosphate dehydrogenase">
    <location>
        <begin position="1"/>
        <end position="334"/>
    </location>
</feature>
<feature type="binding site" evidence="1">
    <location>
        <position position="141"/>
    </location>
    <ligand>
        <name>substrate</name>
    </ligand>
</feature>
<feature type="binding site" evidence="1">
    <location>
        <position position="142"/>
    </location>
    <ligand>
        <name>substrate</name>
    </ligand>
</feature>
<feature type="binding site" evidence="1">
    <location>
        <position position="171"/>
    </location>
    <ligand>
        <name>a divalent metal cation</name>
        <dbReference type="ChEBI" id="CHEBI:60240"/>
        <note>ligand shared between dimeric partners</note>
    </ligand>
</feature>
<feature type="binding site" evidence="1">
    <location>
        <position position="215"/>
    </location>
    <ligand>
        <name>a divalent metal cation</name>
        <dbReference type="ChEBI" id="CHEBI:60240"/>
        <note>ligand shared between dimeric partners</note>
    </ligand>
</feature>
<feature type="binding site" evidence="1">
    <location>
        <position position="270"/>
    </location>
    <ligand>
        <name>a divalent metal cation</name>
        <dbReference type="ChEBI" id="CHEBI:60240"/>
        <note>ligand shared between dimeric partners</note>
    </ligand>
</feature>
<feature type="binding site" evidence="1">
    <location>
        <position position="278"/>
    </location>
    <ligand>
        <name>substrate</name>
    </ligand>
</feature>
<feature type="binding site" evidence="1">
    <location>
        <position position="296"/>
    </location>
    <ligand>
        <name>substrate</name>
    </ligand>
</feature>
<organism>
    <name type="scientific">Clostridium botulinum (strain Okra / Type B1)</name>
    <dbReference type="NCBI Taxonomy" id="498213"/>
    <lineage>
        <taxon>Bacteria</taxon>
        <taxon>Bacillati</taxon>
        <taxon>Bacillota</taxon>
        <taxon>Clostridia</taxon>
        <taxon>Eubacteriales</taxon>
        <taxon>Clostridiaceae</taxon>
        <taxon>Clostridium</taxon>
    </lineage>
</organism>
<accession>B1IGV8</accession>
<comment type="function">
    <text evidence="2">Catalyzes the NAD-dependent oxidation and subsequent decarboxylation of D-threonate 4-phosphate to produce dihydroxyacetone phosphate (DHAP).</text>
</comment>
<comment type="catalytic activity">
    <reaction evidence="2">
        <text>4-O-phospho-D-threonate + NAD(+) = dihydroxyacetone phosphate + CO2 + NADH</text>
        <dbReference type="Rhea" id="RHEA:52396"/>
        <dbReference type="ChEBI" id="CHEBI:16526"/>
        <dbReference type="ChEBI" id="CHEBI:57540"/>
        <dbReference type="ChEBI" id="CHEBI:57642"/>
        <dbReference type="ChEBI" id="CHEBI:57945"/>
        <dbReference type="ChEBI" id="CHEBI:136590"/>
        <dbReference type="EC" id="1.1.1.408"/>
    </reaction>
</comment>
<comment type="cofactor">
    <cofactor evidence="1">
        <name>a divalent metal cation</name>
        <dbReference type="ChEBI" id="CHEBI:60240"/>
    </cofactor>
    <text evidence="1">Binds 1 divalent metal cation per subunit.</text>
</comment>
<comment type="subunit">
    <text evidence="2">Homodimer.</text>
</comment>
<comment type="similarity">
    <text evidence="3">Belongs to the PdxA family. PdxA2 subfamily.</text>
</comment>